<accession>A0A0B5A8Q2</accession>
<evidence type="ECO:0000250" key="1">
    <source>
        <dbReference type="UniProtKB" id="A0A0B5AC95"/>
    </source>
</evidence>
<evidence type="ECO:0000255" key="2"/>
<evidence type="ECO:0000303" key="3">
    <source>
    </source>
</evidence>
<evidence type="ECO:0000305" key="4"/>
<evidence type="ECO:0000305" key="5">
    <source>
    </source>
</evidence>
<evidence type="ECO:0000312" key="6">
    <source>
        <dbReference type="EMBL" id="AJD85830.1"/>
    </source>
</evidence>
<evidence type="ECO:0007829" key="7">
    <source>
        <dbReference type="PDB" id="5JYQ"/>
    </source>
</evidence>
<feature type="signal peptide" evidence="2">
    <location>
        <begin position="1"/>
        <end position="24"/>
    </location>
</feature>
<feature type="propeptide" id="PRO_0000439294" evidence="1">
    <location>
        <begin position="25"/>
        <end position="29"/>
    </location>
</feature>
<feature type="peptide" id="PRO_5002097968" description="Con-Ins G1 B chain" evidence="1">
    <location>
        <begin position="30"/>
        <end position="51"/>
    </location>
</feature>
<feature type="propeptide" id="PRO_0000439295" description="C peptide" evidence="1">
    <location>
        <begin position="52"/>
        <end position="94"/>
    </location>
</feature>
<feature type="peptide" id="PRO_0000439296" description="Con-Ins G1b A chain" evidence="1">
    <location>
        <begin position="95"/>
        <end position="114"/>
    </location>
</feature>
<feature type="modified residue" description="4-hydroxyproline; partial" evidence="1">
    <location>
        <position position="34"/>
    </location>
</feature>
<feature type="modified residue" description="4-carboxyglutamate" evidence="1">
    <location>
        <position position="41"/>
    </location>
</feature>
<feature type="modified residue" description="4-carboxyglutamate" evidence="1">
    <location>
        <position position="98"/>
    </location>
</feature>
<feature type="modified residue" description="4-hydroxyproline; partial" evidence="1">
    <location>
        <position position="104"/>
    </location>
</feature>
<feature type="modified residue" description="4-carboxyglutamate; partial" evidence="1">
    <location>
        <position position="109"/>
    </location>
</feature>
<feature type="modified residue" description="Cysteine amide" evidence="1">
    <location>
        <position position="114"/>
    </location>
</feature>
<feature type="disulfide bond" description="Interchain (between B and A chains)" evidence="1">
    <location>
        <begin position="38"/>
        <end position="101"/>
    </location>
</feature>
<feature type="disulfide bond" description="Interchain (between B and A chains)" evidence="1">
    <location>
        <begin position="50"/>
        <end position="114"/>
    </location>
</feature>
<feature type="disulfide bond" evidence="1">
    <location>
        <begin position="100"/>
        <end position="105"/>
    </location>
</feature>
<feature type="helix" evidence="7">
    <location>
        <begin position="40"/>
        <end position="49"/>
    </location>
</feature>
<proteinExistence type="evidence at protein level"/>
<keyword id="KW-0002">3D-structure</keyword>
<keyword id="KW-0027">Amidation</keyword>
<keyword id="KW-0119">Carbohydrate metabolism</keyword>
<keyword id="KW-0165">Cleavage on pair of basic residues</keyword>
<keyword id="KW-1015">Disulfide bond</keyword>
<keyword id="KW-0301">Gamma-carboxyglutamic acid</keyword>
<keyword id="KW-0313">Glucose metabolism</keyword>
<keyword id="KW-0372">Hormone</keyword>
<keyword id="KW-0379">Hydroxylation</keyword>
<keyword id="KW-0964">Secreted</keyword>
<keyword id="KW-0732">Signal</keyword>
<keyword id="KW-0800">Toxin</keyword>
<name>INS1B_CONGE</name>
<comment type="function">
    <text evidence="1">This venom insulin, from a fish-hunting cone snail, facilitates prey capture by rapidly inducing hypoglycemic shock. It is one of the smallest known insulin found in nature and lacks the C-terminal segment of the B chain that, in human insulin, mediates engagement of the insulin receptor (INSR) and assembly of the hormone's hexameric storage form. Despite lacking this segment, it both binds and activates human insulin receptor (long isoform (HIR-B) of INSR) with only a 10-fold lower potency. In vivo, intraperitoneal injection of this peptide into zebrafish lowers blood glucose with the same potency than human insulin. In addition, when applied to water, this peptide reduces overall locomotor activity of zebrafish larvae, observed as a significant decrease in the percentage of time spent swimming and movement frequency.</text>
</comment>
<comment type="subunit">
    <text evidence="1">Heterodimer of A and B chains; disulfide-linked.</text>
</comment>
<comment type="subcellular location">
    <subcellularLocation>
        <location evidence="1">Secreted</location>
    </subcellularLocation>
</comment>
<comment type="tissue specificity">
    <text evidence="5">Expressed by the venom gland.</text>
</comment>
<comment type="miscellaneous">
    <text evidence="5">Venom insulins constitute about 1/25 of the total venom of C.geographus.</text>
</comment>
<comment type="similarity">
    <text evidence="4">Belongs to the insulin family.</text>
</comment>
<dbReference type="EMBL" id="KP268607">
    <property type="protein sequence ID" value="AJD85830.1"/>
    <property type="molecule type" value="mRNA"/>
</dbReference>
<dbReference type="PDB" id="5JYQ">
    <property type="method" value="X-ray"/>
    <property type="resolution" value="1.95 A"/>
    <property type="chains" value="B=30-52"/>
</dbReference>
<dbReference type="PDB" id="6VEQ">
    <property type="method" value="X-ray"/>
    <property type="resolution" value="3.25 A"/>
    <property type="chains" value="B/H=30-52"/>
</dbReference>
<dbReference type="PDBsum" id="5JYQ"/>
<dbReference type="PDBsum" id="6VEQ"/>
<dbReference type="SMR" id="A0A0B5A8Q2"/>
<dbReference type="GO" id="GO:0005576">
    <property type="term" value="C:extracellular region"/>
    <property type="evidence" value="ECO:0007669"/>
    <property type="project" value="UniProtKB-SubCell"/>
</dbReference>
<dbReference type="GO" id="GO:0005179">
    <property type="term" value="F:hormone activity"/>
    <property type="evidence" value="ECO:0007669"/>
    <property type="project" value="UniProtKB-KW"/>
</dbReference>
<dbReference type="GO" id="GO:0090729">
    <property type="term" value="F:toxin activity"/>
    <property type="evidence" value="ECO:0007669"/>
    <property type="project" value="UniProtKB-KW"/>
</dbReference>
<dbReference type="GO" id="GO:0006006">
    <property type="term" value="P:glucose metabolic process"/>
    <property type="evidence" value="ECO:0007669"/>
    <property type="project" value="UniProtKB-KW"/>
</dbReference>
<dbReference type="Gene3D" id="1.10.100.10">
    <property type="entry name" value="Insulin-like"/>
    <property type="match status" value="1"/>
</dbReference>
<dbReference type="InterPro" id="IPR016179">
    <property type="entry name" value="Insulin-like"/>
</dbReference>
<dbReference type="InterPro" id="IPR036438">
    <property type="entry name" value="Insulin-like_sf"/>
</dbReference>
<dbReference type="InterPro" id="IPR022353">
    <property type="entry name" value="Insulin_CS"/>
</dbReference>
<dbReference type="InterPro" id="IPR022352">
    <property type="entry name" value="Insulin_family"/>
</dbReference>
<dbReference type="Pfam" id="PF00049">
    <property type="entry name" value="Insulin"/>
    <property type="match status" value="1"/>
</dbReference>
<dbReference type="PRINTS" id="PR00276">
    <property type="entry name" value="INSULINFAMLY"/>
</dbReference>
<dbReference type="SMART" id="SM00078">
    <property type="entry name" value="IlGF"/>
    <property type="match status" value="1"/>
</dbReference>
<dbReference type="SUPFAM" id="SSF56994">
    <property type="entry name" value="Insulin-like"/>
    <property type="match status" value="1"/>
</dbReference>
<dbReference type="PROSITE" id="PS00262">
    <property type="entry name" value="INSULIN"/>
    <property type="match status" value="1"/>
</dbReference>
<protein>
    <recommendedName>
        <fullName evidence="3">Con-Ins G1b</fullName>
    </recommendedName>
    <alternativeName>
        <fullName evidence="6">Insulin 1b</fullName>
    </alternativeName>
    <component>
        <recommendedName>
            <fullName evidence="3">Con-Ins G1 B chain</fullName>
        </recommendedName>
    </component>
    <component>
        <recommendedName>
            <fullName evidence="3">Con-Ins G1b A chain</fullName>
        </recommendedName>
    </component>
</protein>
<reference key="1">
    <citation type="journal article" date="2015" name="Proc. Natl. Acad. Sci. U.S.A.">
        <title>Specialized insulin is used for chemical warfare by fish-hunting cone snails.</title>
        <authorList>
            <person name="Safavi-Hemami H."/>
            <person name="Gajewiak J."/>
            <person name="Karanth S."/>
            <person name="Robinson S.D."/>
            <person name="Ueberheide B."/>
            <person name="Douglass A.D."/>
            <person name="Schlegel A."/>
            <person name="Imperial J.S."/>
            <person name="Watkins M."/>
            <person name="Bandyopadhyay P.K."/>
            <person name="Yandell M."/>
            <person name="Li Q."/>
            <person name="Purcell A.W."/>
            <person name="Norton R.S."/>
            <person name="Ellgaard L."/>
            <person name="Olivera B.M."/>
        </authorList>
    </citation>
    <scope>NUCLEOTIDE SEQUENCE [MRNA]</scope>
    <source>
        <tissue>Venom gland</tissue>
    </source>
</reference>
<reference key="2">
    <citation type="journal article" date="2016" name="Nat. Struct. Mol. Biol.">
        <title>A minimized human insulin-receptor-binding motif revealed in a Conus geographus venom insulin.</title>
        <authorList>
            <person name="Menting J.G."/>
            <person name="Gajewiak J."/>
            <person name="MacRaild C.A."/>
            <person name="Chou D.H."/>
            <person name="Disotuar M.M."/>
            <person name="Smith N.A."/>
            <person name="Miller C."/>
            <person name="Erchegyi J."/>
            <person name="Rivier J.E."/>
            <person name="Olivera B.M."/>
            <person name="Forbes B.E."/>
            <person name="Smith B.J."/>
            <person name="Norton R.S."/>
            <person name="Safavi-Hemami H."/>
            <person name="Lawrence M.C."/>
        </authorList>
    </citation>
    <scope>X-RAY CRYSTALLOGRAPHY (1.95 ANGSTROMS) OF 30-52</scope>
    <scope>SYNTHESIS OF 30-52</scope>
</reference>
<organism>
    <name type="scientific">Conus geographus</name>
    <name type="common">Geography cone</name>
    <name type="synonym">Nubecula geographus</name>
    <dbReference type="NCBI Taxonomy" id="6491"/>
    <lineage>
        <taxon>Eukaryota</taxon>
        <taxon>Metazoa</taxon>
        <taxon>Spiralia</taxon>
        <taxon>Lophotrochozoa</taxon>
        <taxon>Mollusca</taxon>
        <taxon>Gastropoda</taxon>
        <taxon>Caenogastropoda</taxon>
        <taxon>Neogastropoda</taxon>
        <taxon>Conoidea</taxon>
        <taxon>Conidae</taxon>
        <taxon>Conus</taxon>
        <taxon>Gastridium</taxon>
    </lineage>
</organism>
<sequence>MTTSFYFLLMALGLLLYVCQSSFGNQHTRTFDTPKHRCGSEITNSYMDLCYRKRNDAGEKRGRASPLWQRRGFLSKLKARAKRNGAFHLPRDGRGVVEHCCHRPCSNAEFRKYCG</sequence>